<comment type="function">
    <text>Catalyzes the omega-hydroxylation of various fatty acids (FA) from 10 to 18 carbon atoms. The substrate specificity is higher for laurate &gt; palmitate &gt; myristate &gt; linolenate &gt; linoleate &gt; oleate &gt; caprate. May play a minor role in cutin synthesis and could be involved in plant defense.</text>
</comment>
<comment type="cofactor">
    <cofactor evidence="1">
        <name>heme</name>
        <dbReference type="ChEBI" id="CHEBI:30413"/>
    </cofactor>
</comment>
<comment type="subcellular location">
    <subcellularLocation>
        <location evidence="1">Endoplasmic reticulum membrane</location>
        <topology evidence="1">Single-pass membrane protein</topology>
    </subcellularLocation>
</comment>
<comment type="induction">
    <text>By clofibrate.</text>
</comment>
<comment type="similarity">
    <text evidence="3">Belongs to the cytochrome P450 family.</text>
</comment>
<dbReference type="EC" id="1.14.-.-"/>
<dbReference type="EMBL" id="AF030260">
    <property type="protein sequence ID" value="AAD10204.1"/>
    <property type="molecule type" value="mRNA"/>
</dbReference>
<dbReference type="PIR" id="T08014">
    <property type="entry name" value="T08014"/>
</dbReference>
<dbReference type="SMR" id="O81117"/>
<dbReference type="KEGG" id="ag:AAD10204"/>
<dbReference type="GO" id="GO:0005789">
    <property type="term" value="C:endoplasmic reticulum membrane"/>
    <property type="evidence" value="ECO:0007669"/>
    <property type="project" value="UniProtKB-SubCell"/>
</dbReference>
<dbReference type="GO" id="GO:0020037">
    <property type="term" value="F:heme binding"/>
    <property type="evidence" value="ECO:0007669"/>
    <property type="project" value="InterPro"/>
</dbReference>
<dbReference type="GO" id="GO:0005506">
    <property type="term" value="F:iron ion binding"/>
    <property type="evidence" value="ECO:0007669"/>
    <property type="project" value="InterPro"/>
</dbReference>
<dbReference type="GO" id="GO:0004497">
    <property type="term" value="F:monooxygenase activity"/>
    <property type="evidence" value="ECO:0007669"/>
    <property type="project" value="UniProtKB-KW"/>
</dbReference>
<dbReference type="GO" id="GO:0016705">
    <property type="term" value="F:oxidoreductase activity, acting on paired donors, with incorporation or reduction of molecular oxygen"/>
    <property type="evidence" value="ECO:0007669"/>
    <property type="project" value="InterPro"/>
</dbReference>
<dbReference type="CDD" id="cd11064">
    <property type="entry name" value="CYP86A"/>
    <property type="match status" value="1"/>
</dbReference>
<dbReference type="Gene3D" id="1.10.630.10">
    <property type="entry name" value="Cytochrome P450"/>
    <property type="match status" value="1"/>
</dbReference>
<dbReference type="InterPro" id="IPR001128">
    <property type="entry name" value="Cyt_P450"/>
</dbReference>
<dbReference type="InterPro" id="IPR002401">
    <property type="entry name" value="Cyt_P450_E_grp-I"/>
</dbReference>
<dbReference type="InterPro" id="IPR036396">
    <property type="entry name" value="Cyt_P450_sf"/>
</dbReference>
<dbReference type="PANTHER" id="PTHR24296">
    <property type="entry name" value="CYTOCHROME P450"/>
    <property type="match status" value="1"/>
</dbReference>
<dbReference type="Pfam" id="PF00067">
    <property type="entry name" value="p450"/>
    <property type="match status" value="1"/>
</dbReference>
<dbReference type="PRINTS" id="PR00463">
    <property type="entry name" value="EP450I"/>
</dbReference>
<dbReference type="PRINTS" id="PR00385">
    <property type="entry name" value="P450"/>
</dbReference>
<dbReference type="SUPFAM" id="SSF48264">
    <property type="entry name" value="Cytochrome P450"/>
    <property type="match status" value="1"/>
</dbReference>
<proteinExistence type="evidence at transcript level"/>
<protein>
    <recommendedName>
        <fullName>Cytochrome P450 94A1</fullName>
        <ecNumber>1.14.-.-</ecNumber>
    </recommendedName>
    <alternativeName>
        <fullName>P450-dependent fatty acid omega-hydroxylase</fullName>
    </alternativeName>
</protein>
<sequence length="514" mass="59111">MFQFHLEVLLPYLLPLLLLILPTTIFFLTKPNNKVSSTSTNNNIITLPKSYPLIGSYLSFRKNLHRRIQWLSDIVQISPSATFQLDGTLGKRQIITGNPSTVQHILKNQFSNYQKGTTFTNTLSDFLGTGIFNTNGPNWKFQRQVASHEFNTKSIRNFVEHIVDTELTNRLIPILTSSTQTNNILDFQDILQRFTFDNICNIAFGYDPEYLTPSTNRSKFAEAYEDATEISSKRFRLPLPIIWKIKKYFNIGSEKRLKEAVTEVRSFAKKLVREKKRELEEKSSLETEDMLSRFLSSGHSDEDFVADIVISFILAGKDTTSAALTWFFWLLWKNPRVEEEIVNELSKKSELMVYDEVKEMVYTHAALSESMRLYPPVPMDSKEAVNDDVLPDGWVVKKGTIVTYHVYAMGRMKSLWGDDWAEFRPERWLEKDEVNGKWVFVGRDSYSYPVFQAGPRVCLGKEMAFMQMKRIVAGIVGKFKVVPEAHLAQEPGFISFLSSQMEGGFPVTIQKRDS</sequence>
<keyword id="KW-0256">Endoplasmic reticulum</keyword>
<keyword id="KW-0349">Heme</keyword>
<keyword id="KW-0408">Iron</keyword>
<keyword id="KW-0472">Membrane</keyword>
<keyword id="KW-0479">Metal-binding</keyword>
<keyword id="KW-0503">Monooxygenase</keyword>
<keyword id="KW-0560">Oxidoreductase</keyword>
<keyword id="KW-0812">Transmembrane</keyword>
<keyword id="KW-1133">Transmembrane helix</keyword>
<organism>
    <name type="scientific">Vicia sativa</name>
    <name type="common">Spring vetch</name>
    <name type="synonym">Tare</name>
    <dbReference type="NCBI Taxonomy" id="3908"/>
    <lineage>
        <taxon>Eukaryota</taxon>
        <taxon>Viridiplantae</taxon>
        <taxon>Streptophyta</taxon>
        <taxon>Embryophyta</taxon>
        <taxon>Tracheophyta</taxon>
        <taxon>Spermatophyta</taxon>
        <taxon>Magnoliopsida</taxon>
        <taxon>eudicotyledons</taxon>
        <taxon>Gunneridae</taxon>
        <taxon>Pentapetalae</taxon>
        <taxon>rosids</taxon>
        <taxon>fabids</taxon>
        <taxon>Fabales</taxon>
        <taxon>Fabaceae</taxon>
        <taxon>Papilionoideae</taxon>
        <taxon>50 kb inversion clade</taxon>
        <taxon>NPAAA clade</taxon>
        <taxon>Hologalegina</taxon>
        <taxon>IRL clade</taxon>
        <taxon>Fabeae</taxon>
        <taxon>Vicia</taxon>
    </lineage>
</organism>
<gene>
    <name type="primary">CYP94A1</name>
    <name type="synonym">VAGH111</name>
</gene>
<feature type="chain" id="PRO_0000052192" description="Cytochrome P450 94A1">
    <location>
        <begin position="1"/>
        <end position="514"/>
    </location>
</feature>
<feature type="transmembrane region" description="Helical" evidence="2">
    <location>
        <begin position="7"/>
        <end position="29"/>
    </location>
</feature>
<feature type="binding site" description="axial binding residue" evidence="1">
    <location>
        <position position="458"/>
    </location>
    <ligand>
        <name>heme</name>
        <dbReference type="ChEBI" id="CHEBI:30413"/>
    </ligand>
    <ligandPart>
        <name>Fe</name>
        <dbReference type="ChEBI" id="CHEBI:18248"/>
    </ligandPart>
</feature>
<accession>O81117</accession>
<name>C94A1_VICSA</name>
<reference key="1">
    <citation type="journal article" date="1998" name="Biochem. J.">
        <title>Functional expression in yeast and characterization of a clofibrate-inducible plant cytochrome P-450 (CYP94A1) involved in cutin monomers synthesis.</title>
        <authorList>
            <person name="Tijet N."/>
            <person name="Helvig C."/>
            <person name="Pinot F."/>
            <person name="Le Bouquin R."/>
            <person name="Lesot A."/>
            <person name="Durst F."/>
            <person name="Salauen J.-P."/>
            <person name="Benveniste I."/>
        </authorList>
    </citation>
    <scope>NUCLEOTIDE SEQUENCE [MRNA]</scope>
    <source>
        <tissue>Seedling</tissue>
    </source>
</reference>
<evidence type="ECO:0000250" key="1"/>
<evidence type="ECO:0000255" key="2"/>
<evidence type="ECO:0000305" key="3"/>